<organism>
    <name type="scientific">Pseudomonas putida</name>
    <name type="common">Arthrobacter siderocapsulatus</name>
    <dbReference type="NCBI Taxonomy" id="303"/>
    <lineage>
        <taxon>Bacteria</taxon>
        <taxon>Pseudomonadati</taxon>
        <taxon>Pseudomonadota</taxon>
        <taxon>Gammaproteobacteria</taxon>
        <taxon>Pseudomonadales</taxon>
        <taxon>Pseudomonadaceae</taxon>
        <taxon>Pseudomonas</taxon>
    </lineage>
</organism>
<proteinExistence type="evidence at protein level"/>
<sequence>MLKRQSAPLGTWLMSASASTAEALGYAGFDWLLVDMEHVPIEFRDLWHILQAIQCTGAQPIVRVAANDPVLLKRALDLGSTNVMVPFVENAEQARAAVSAVKYPPMGTRGFAAVHRASRYGTWKGYGQQANDSVSCILQIETATALANLEEIAAVPGVDALFLGPGDLSSVCGHIGNPAHPDIQAMISDAIVRCKAIGMPIGIVGGTPELVGSYLEQGYAFAAVASDMAMMMSKANELLVALKGRQAPEAVATAY</sequence>
<accession>P0DOV8</accession>
<keyword id="KW-0456">Lyase</keyword>
<keyword id="KW-0479">Metal-binding</keyword>
<dbReference type="EC" id="4.1.2.58" evidence="2"/>
<dbReference type="EMBL" id="JTCJ01000004">
    <property type="protein sequence ID" value="KHL76360.1"/>
    <property type="molecule type" value="Genomic_DNA"/>
</dbReference>
<dbReference type="SMR" id="P0DOV8"/>
<dbReference type="BRENDA" id="4.1.2.58">
    <property type="organism ID" value="5092"/>
</dbReference>
<dbReference type="GO" id="GO:0005737">
    <property type="term" value="C:cytoplasm"/>
    <property type="evidence" value="ECO:0007669"/>
    <property type="project" value="TreeGrafter"/>
</dbReference>
<dbReference type="GO" id="GO:0016832">
    <property type="term" value="F:aldehyde-lyase activity"/>
    <property type="evidence" value="ECO:0007669"/>
    <property type="project" value="TreeGrafter"/>
</dbReference>
<dbReference type="GO" id="GO:0046872">
    <property type="term" value="F:metal ion binding"/>
    <property type="evidence" value="ECO:0007669"/>
    <property type="project" value="UniProtKB-KW"/>
</dbReference>
<dbReference type="Gene3D" id="3.20.20.60">
    <property type="entry name" value="Phosphoenolpyruvate-binding domains"/>
    <property type="match status" value="1"/>
</dbReference>
<dbReference type="InterPro" id="IPR005000">
    <property type="entry name" value="Aldolase/citrate-lyase_domain"/>
</dbReference>
<dbReference type="InterPro" id="IPR050251">
    <property type="entry name" value="HpcH-HpaI_aldolase"/>
</dbReference>
<dbReference type="InterPro" id="IPR015813">
    <property type="entry name" value="Pyrv/PenolPyrv_kinase-like_dom"/>
</dbReference>
<dbReference type="InterPro" id="IPR040442">
    <property type="entry name" value="Pyrv_kinase-like_dom_sf"/>
</dbReference>
<dbReference type="PANTHER" id="PTHR30502">
    <property type="entry name" value="2-KETO-3-DEOXY-L-RHAMNONATE ALDOLASE"/>
    <property type="match status" value="1"/>
</dbReference>
<dbReference type="PANTHER" id="PTHR30502:SF0">
    <property type="entry name" value="PHOSPHOENOLPYRUVATE CARBOXYLASE FAMILY PROTEIN"/>
    <property type="match status" value="1"/>
</dbReference>
<dbReference type="Pfam" id="PF03328">
    <property type="entry name" value="HpcH_HpaI"/>
    <property type="match status" value="1"/>
</dbReference>
<dbReference type="SUPFAM" id="SSF51621">
    <property type="entry name" value="Phosphoenolpyruvate/pyruvate domain"/>
    <property type="match status" value="1"/>
</dbReference>
<feature type="chain" id="PRO_0000438493" description="2-dehydro-3,6-dideoxy-6-sulfogluconate aldolase">
    <location>
        <begin position="1"/>
        <end position="255"/>
    </location>
</feature>
<feature type="active site" description="Proton acceptor" evidence="1">
    <location>
        <position position="38"/>
    </location>
</feature>
<feature type="binding site" evidence="1">
    <location>
        <position position="141"/>
    </location>
    <ligand>
        <name>a divalent metal cation</name>
        <dbReference type="ChEBI" id="CHEBI:60240"/>
    </ligand>
</feature>
<feature type="binding site" evidence="1">
    <location>
        <position position="167"/>
    </location>
    <ligand>
        <name>a divalent metal cation</name>
        <dbReference type="ChEBI" id="CHEBI:60240"/>
    </ligand>
</feature>
<feature type="site" description="Transition state stabilizer" evidence="1">
    <location>
        <position position="63"/>
    </location>
</feature>
<feature type="site" description="Increases basicity of active site His" evidence="1">
    <location>
        <position position="77"/>
    </location>
</feature>
<evidence type="ECO:0000250" key="1">
    <source>
        <dbReference type="UniProtKB" id="Q47098"/>
    </source>
</evidence>
<evidence type="ECO:0000269" key="2">
    <source>
    </source>
</evidence>
<evidence type="ECO:0000303" key="3">
    <source>
    </source>
</evidence>
<evidence type="ECO:0000305" key="4"/>
<evidence type="ECO:0000312" key="5">
    <source>
        <dbReference type="EMBL" id="KHL76360.1"/>
    </source>
</evidence>
<name>KDSGA_PSEPU</name>
<gene>
    <name evidence="5" type="ORF">PpSQ1_00455</name>
</gene>
<comment type="function">
    <text evidence="2">Catalyzes the retro-aldol cleavage of 2-dehydro-3,6-dideoxy-6-sulfo-D-gluconate to (2S)-3-sulfolactaldehyde and pyruvate. Is involved in a degradation pathway of sulfoquinovose (SQ) that allows P.putida SQ1 to use SQ as the sole carbon and energy source for growth.</text>
</comment>
<comment type="catalytic activity">
    <reaction evidence="2">
        <text>2-dehydro-3,6-dideoxy-6-sulfo-D-gluconate = (2S)-3-sulfolactaldehyde + pyruvate</text>
        <dbReference type="Rhea" id="RHEA:47924"/>
        <dbReference type="ChEBI" id="CHEBI:15361"/>
        <dbReference type="ChEBI" id="CHEBI:88094"/>
        <dbReference type="ChEBI" id="CHEBI:90109"/>
        <dbReference type="EC" id="4.1.2.58"/>
    </reaction>
</comment>
<comment type="cofactor">
    <cofactor evidence="1">
        <name>a divalent metal cation</name>
        <dbReference type="ChEBI" id="CHEBI:60240"/>
    </cofactor>
    <text evidence="1">Binds 1 divalent metal cation per subunit.</text>
</comment>
<comment type="subunit">
    <text evidence="1">Homohexamer; trimer of dimers.</text>
</comment>
<comment type="induction">
    <text evidence="2">Is highly up-regulated during growth on sulfoquinovose, compared to growth on glucose or succinate (at protein level).</text>
</comment>
<comment type="similarity">
    <text evidence="4">Belongs to the HpcH/HpaI aldolase family.</text>
</comment>
<reference key="1">
    <citation type="journal article" date="2015" name="Stand. Genomic Sci.">
        <title>Permanent draft genome sequence of sulfoquinovose-degrading Pseudomonas putida strain SQ1.</title>
        <authorList>
            <person name="Felux A.K."/>
            <person name="Franchini P."/>
            <person name="Schleheck D."/>
        </authorList>
    </citation>
    <scope>NUCLEOTIDE SEQUENCE [LARGE SCALE GENOMIC DNA]</scope>
    <source>
        <strain>SQ1</strain>
    </source>
</reference>
<reference key="2">
    <citation type="journal article" date="2015" name="Proc. Natl. Acad. Sci. U.S.A.">
        <title>Entner-Doudoroff pathway for sulfoquinovose degradation in Pseudomonas putida SQ1.</title>
        <authorList>
            <person name="Felux A.K."/>
            <person name="Spiteller D."/>
            <person name="Klebensberger J."/>
            <person name="Schleheck D."/>
        </authorList>
    </citation>
    <scope>FUNCTION</scope>
    <scope>CATALYTIC ACTIVITY</scope>
    <scope>INDUCTION</scope>
    <source>
        <strain>SQ1</strain>
    </source>
</reference>
<protein>
    <recommendedName>
        <fullName evidence="4">2-dehydro-3,6-dideoxy-6-sulfogluconate aldolase</fullName>
        <ecNumber evidence="2">4.1.2.58</ecNumber>
    </recommendedName>
    <alternativeName>
        <fullName evidence="3">2-keto-3,6-dideoxy-6-sulfogluconate aldolase</fullName>
        <shortName evidence="3">KDSG aldolase</shortName>
    </alternativeName>
</protein>